<name>IDH1_CANTR</name>
<protein>
    <recommendedName>
        <fullName>Isocitrate dehydrogenase [NADP], mitochondrial</fullName>
        <shortName>IDH</shortName>
        <ecNumber>1.1.1.42</ecNumber>
    </recommendedName>
    <alternativeName>
        <fullName>CtIDP1</fullName>
    </alternativeName>
    <alternativeName>
        <fullName>IDP</fullName>
    </alternativeName>
    <alternativeName>
        <fullName>NADP(+)-specific ICDH</fullName>
    </alternativeName>
    <alternativeName>
        <fullName>Oxalosuccinate decarboxylase</fullName>
    </alternativeName>
</protein>
<evidence type="ECO:0000250" key="1"/>
<evidence type="ECO:0000305" key="2"/>
<sequence length="430" mass="48009">MIRASAIQRTAMLLRQLRGFSTSATLADKIKVKNPIVELDGDEMTRIIWQKIKDQLILPYLDVDLKYYDLGIESRDATDDQITIDAANAIKEYGVGVKCATITPDEARVKEFHLKKMWLSPNGTIRNILGGTVFRESIIIPCIPRLIPGWEKPIVIGRHAFGDQYKATDLVINEPGRLELRFTPASGGEAQTQKVYDYTGPGVGLAMYNTDESITGFAHASFKMALAKGLPLYMSTKNTILKKYDGRFKDIFQQIYEQDYAAEFEKQGLWYEHRLIDDMVAQMIKSKGGFVMALKNYDGDVQSDIVAQGFGSLGLMTSALMTPDGKAYEAEAAHGTVTRHYRQHQQGKETSTNSIASIFAWTRGLAQRGKLDETPDVVDFASKLEQATIDTVEVDRIMTKDLALAMGKTDRSAYVTTTEFLDAVADRLKK</sequence>
<reference key="1">
    <citation type="journal article" date="1997" name="Arch. Microbiol.">
        <title>Immunochemically distinct NADP-linked isocitrate dehydrogenase isozymes in mitochondria and peroxisomes of Candida tropicalis.</title>
        <authorList>
            <person name="Imajo T."/>
            <person name="Kawachi H."/>
            <person name="Atomi H."/>
            <person name="Sanuki S."/>
            <person name="Yamamoto S."/>
            <person name="Ueda M."/>
            <person name="Tanaka A."/>
        </authorList>
    </citation>
    <scope>NUCLEOTIDE SEQUENCE [GENOMIC DNA]</scope>
    <source>
        <strain>ATCC 20336 / pK233 / NCYC 997</strain>
    </source>
</reference>
<accession>O13285</accession>
<dbReference type="EC" id="1.1.1.42"/>
<dbReference type="EMBL" id="AB004556">
    <property type="protein sequence ID" value="BAA22945.1"/>
    <property type="molecule type" value="Genomic_DNA"/>
</dbReference>
<dbReference type="SMR" id="O13285"/>
<dbReference type="VEuPathDB" id="FungiDB:CTMYA2_016810"/>
<dbReference type="VEuPathDB" id="FungiDB:CTRG_01521"/>
<dbReference type="GO" id="GO:0005739">
    <property type="term" value="C:mitochondrion"/>
    <property type="evidence" value="ECO:0007669"/>
    <property type="project" value="UniProtKB-SubCell"/>
</dbReference>
<dbReference type="GO" id="GO:0004450">
    <property type="term" value="F:isocitrate dehydrogenase (NADP+) activity"/>
    <property type="evidence" value="ECO:0007669"/>
    <property type="project" value="UniProtKB-EC"/>
</dbReference>
<dbReference type="GO" id="GO:0000287">
    <property type="term" value="F:magnesium ion binding"/>
    <property type="evidence" value="ECO:0007669"/>
    <property type="project" value="InterPro"/>
</dbReference>
<dbReference type="GO" id="GO:0051287">
    <property type="term" value="F:NAD binding"/>
    <property type="evidence" value="ECO:0007669"/>
    <property type="project" value="InterPro"/>
</dbReference>
<dbReference type="GO" id="GO:0006097">
    <property type="term" value="P:glyoxylate cycle"/>
    <property type="evidence" value="ECO:0007669"/>
    <property type="project" value="UniProtKB-KW"/>
</dbReference>
<dbReference type="GO" id="GO:0006102">
    <property type="term" value="P:isocitrate metabolic process"/>
    <property type="evidence" value="ECO:0007669"/>
    <property type="project" value="InterPro"/>
</dbReference>
<dbReference type="GO" id="GO:0006739">
    <property type="term" value="P:NADP metabolic process"/>
    <property type="evidence" value="ECO:0007669"/>
    <property type="project" value="TreeGrafter"/>
</dbReference>
<dbReference type="GO" id="GO:0006099">
    <property type="term" value="P:tricarboxylic acid cycle"/>
    <property type="evidence" value="ECO:0007669"/>
    <property type="project" value="UniProtKB-KW"/>
</dbReference>
<dbReference type="FunFam" id="3.40.718.10:FF:000002">
    <property type="entry name" value="Isocitrate dehydrogenase [NADP]"/>
    <property type="match status" value="1"/>
</dbReference>
<dbReference type="Gene3D" id="3.40.718.10">
    <property type="entry name" value="Isopropylmalate Dehydrogenase"/>
    <property type="match status" value="1"/>
</dbReference>
<dbReference type="InterPro" id="IPR019818">
    <property type="entry name" value="IsoCit/isopropylmalate_DH_CS"/>
</dbReference>
<dbReference type="InterPro" id="IPR004790">
    <property type="entry name" value="Isocitrate_DH_NADP"/>
</dbReference>
<dbReference type="InterPro" id="IPR024084">
    <property type="entry name" value="IsoPropMal-DH-like_dom"/>
</dbReference>
<dbReference type="NCBIfam" id="TIGR00127">
    <property type="entry name" value="nadp_idh_euk"/>
    <property type="match status" value="1"/>
</dbReference>
<dbReference type="NCBIfam" id="NF006156">
    <property type="entry name" value="PRK08299.1"/>
    <property type="match status" value="1"/>
</dbReference>
<dbReference type="PANTHER" id="PTHR11822:SF21">
    <property type="entry name" value="ISOCITRATE DEHYDROGENASE [NADP], MITOCHONDRIAL"/>
    <property type="match status" value="1"/>
</dbReference>
<dbReference type="PANTHER" id="PTHR11822">
    <property type="entry name" value="NADP-SPECIFIC ISOCITRATE DEHYDROGENASE"/>
    <property type="match status" value="1"/>
</dbReference>
<dbReference type="Pfam" id="PF00180">
    <property type="entry name" value="Iso_dh"/>
    <property type="match status" value="1"/>
</dbReference>
<dbReference type="PIRSF" id="PIRSF000108">
    <property type="entry name" value="IDH_NADP"/>
    <property type="match status" value="1"/>
</dbReference>
<dbReference type="SMART" id="SM01329">
    <property type="entry name" value="Iso_dh"/>
    <property type="match status" value="1"/>
</dbReference>
<dbReference type="SUPFAM" id="SSF53659">
    <property type="entry name" value="Isocitrate/Isopropylmalate dehydrogenase-like"/>
    <property type="match status" value="1"/>
</dbReference>
<dbReference type="PROSITE" id="PS00470">
    <property type="entry name" value="IDH_IMDH"/>
    <property type="match status" value="1"/>
</dbReference>
<feature type="transit peptide" description="Mitochondrion" evidence="1">
    <location>
        <begin position="1"/>
        <end position="27"/>
    </location>
</feature>
<feature type="chain" id="PRO_0000014424" description="Isocitrate dehydrogenase [NADP], mitochondrial">
    <location>
        <begin position="28"/>
        <end position="430"/>
    </location>
</feature>
<feature type="binding site" evidence="1">
    <location>
        <begin position="101"/>
        <end position="103"/>
    </location>
    <ligand>
        <name>NADP(+)</name>
        <dbReference type="ChEBI" id="CHEBI:58349"/>
    </ligand>
</feature>
<feature type="binding site" evidence="1">
    <location>
        <position position="103"/>
    </location>
    <ligand>
        <name>substrate</name>
    </ligand>
</feature>
<feature type="binding site" evidence="1">
    <location>
        <position position="108"/>
    </location>
    <ligand>
        <name>NADP(+)</name>
        <dbReference type="ChEBI" id="CHEBI:58349"/>
    </ligand>
</feature>
<feature type="binding site" evidence="1">
    <location>
        <begin position="120"/>
        <end position="126"/>
    </location>
    <ligand>
        <name>substrate</name>
    </ligand>
</feature>
<feature type="binding site" evidence="1">
    <location>
        <position position="135"/>
    </location>
    <ligand>
        <name>substrate</name>
    </ligand>
</feature>
<feature type="binding site" evidence="1">
    <location>
        <position position="158"/>
    </location>
    <ligand>
        <name>substrate</name>
    </ligand>
</feature>
<feature type="binding site" evidence="1">
    <location>
        <position position="277"/>
    </location>
    <ligand>
        <name>Mn(2+)</name>
        <dbReference type="ChEBI" id="CHEBI:29035"/>
    </ligand>
</feature>
<feature type="binding site" evidence="1">
    <location>
        <position position="285"/>
    </location>
    <ligand>
        <name>NADP(+)</name>
        <dbReference type="ChEBI" id="CHEBI:58349"/>
    </ligand>
</feature>
<feature type="binding site" evidence="1">
    <location>
        <position position="300"/>
    </location>
    <ligand>
        <name>Mn(2+)</name>
        <dbReference type="ChEBI" id="CHEBI:29035"/>
    </ligand>
</feature>
<feature type="binding site" evidence="1">
    <location>
        <begin position="335"/>
        <end position="340"/>
    </location>
    <ligand>
        <name>NADP(+)</name>
        <dbReference type="ChEBI" id="CHEBI:58349"/>
    </ligand>
</feature>
<feature type="binding site" evidence="1">
    <location>
        <position position="353"/>
    </location>
    <ligand>
        <name>NADP(+)</name>
        <dbReference type="ChEBI" id="CHEBI:58349"/>
    </ligand>
</feature>
<feature type="site" description="Critical for catalysis" evidence="1">
    <location>
        <position position="165"/>
    </location>
</feature>
<feature type="site" description="Critical for catalysis" evidence="1">
    <location>
        <position position="237"/>
    </location>
</feature>
<organism>
    <name type="scientific">Candida tropicalis</name>
    <name type="common">Yeast</name>
    <dbReference type="NCBI Taxonomy" id="5482"/>
    <lineage>
        <taxon>Eukaryota</taxon>
        <taxon>Fungi</taxon>
        <taxon>Dikarya</taxon>
        <taxon>Ascomycota</taxon>
        <taxon>Saccharomycotina</taxon>
        <taxon>Pichiomycetes</taxon>
        <taxon>Debaryomycetaceae</taxon>
        <taxon>Candida/Lodderomyces clade</taxon>
        <taxon>Candida</taxon>
    </lineage>
</organism>
<comment type="function">
    <text>Mitochondrial IDP1 may regulate flux through the tricarboxylic acid cycle and respiration. Its probably critical function is the production of NADPH.</text>
</comment>
<comment type="catalytic activity">
    <reaction>
        <text>D-threo-isocitrate + NADP(+) = 2-oxoglutarate + CO2 + NADPH</text>
        <dbReference type="Rhea" id="RHEA:19629"/>
        <dbReference type="ChEBI" id="CHEBI:15562"/>
        <dbReference type="ChEBI" id="CHEBI:16526"/>
        <dbReference type="ChEBI" id="CHEBI:16810"/>
        <dbReference type="ChEBI" id="CHEBI:57783"/>
        <dbReference type="ChEBI" id="CHEBI:58349"/>
        <dbReference type="EC" id="1.1.1.42"/>
    </reaction>
</comment>
<comment type="cofactor">
    <cofactor evidence="1">
        <name>Mg(2+)</name>
        <dbReference type="ChEBI" id="CHEBI:18420"/>
    </cofactor>
    <cofactor evidence="1">
        <name>Mn(2+)</name>
        <dbReference type="ChEBI" id="CHEBI:29035"/>
    </cofactor>
    <text evidence="1">Binds 1 Mg(2+) or Mn(2+) ion per subunit.</text>
</comment>
<comment type="subunit">
    <text evidence="1">Homodimer.</text>
</comment>
<comment type="subcellular location">
    <subcellularLocation>
        <location>Mitochondrion</location>
    </subcellularLocation>
</comment>
<comment type="similarity">
    <text evidence="2">Belongs to the isocitrate and isopropylmalate dehydrogenases family.</text>
</comment>
<gene>
    <name type="primary">IDP1</name>
</gene>
<proteinExistence type="inferred from homology"/>
<keyword id="KW-0329">Glyoxylate bypass</keyword>
<keyword id="KW-0460">Magnesium</keyword>
<keyword id="KW-0464">Manganese</keyword>
<keyword id="KW-0479">Metal-binding</keyword>
<keyword id="KW-0496">Mitochondrion</keyword>
<keyword id="KW-0521">NADP</keyword>
<keyword id="KW-0560">Oxidoreductase</keyword>
<keyword id="KW-0809">Transit peptide</keyword>
<keyword id="KW-0816">Tricarboxylic acid cycle</keyword>